<comment type="function">
    <text evidence="5 6">Required for hydroxylation of C-4 in the sphingoid moiety of ceramide. Catalyzes the conversion of sphinganine to phytosphingosine in sphingolipid biosynthesis. Involved in the response to syringomycin.</text>
</comment>
<comment type="catalytic activity">
    <reaction evidence="6">
        <text>sphinganine + 2 Fe(II)-[cytochrome b5] + O2 + 2 H(+) = (4R)-hydroxysphinganine + 2 Fe(III)-[cytochrome b5] + H2O</text>
        <dbReference type="Rhea" id="RHEA:33519"/>
        <dbReference type="Rhea" id="RHEA-COMP:10438"/>
        <dbReference type="Rhea" id="RHEA-COMP:10439"/>
        <dbReference type="ChEBI" id="CHEBI:15377"/>
        <dbReference type="ChEBI" id="CHEBI:15378"/>
        <dbReference type="ChEBI" id="CHEBI:15379"/>
        <dbReference type="ChEBI" id="CHEBI:29033"/>
        <dbReference type="ChEBI" id="CHEBI:29034"/>
        <dbReference type="ChEBI" id="CHEBI:57817"/>
        <dbReference type="ChEBI" id="CHEBI:64124"/>
    </reaction>
    <physiologicalReaction direction="left-to-right" evidence="9">
        <dbReference type="Rhea" id="RHEA:33520"/>
    </physiologicalReaction>
</comment>
<comment type="catalytic activity">
    <reaction evidence="5 6">
        <text>an N-acylsphinganine + 2 Fe(II)-[cytochrome b5] + O2 + 2 H(+) = an N-acyl-(4R)-4-hydroxysphinganine + 2 Fe(III)-[cytochrome b5] + H2O</text>
        <dbReference type="Rhea" id="RHEA:46364"/>
        <dbReference type="Rhea" id="RHEA-COMP:10438"/>
        <dbReference type="Rhea" id="RHEA-COMP:10439"/>
        <dbReference type="ChEBI" id="CHEBI:15377"/>
        <dbReference type="ChEBI" id="CHEBI:15378"/>
        <dbReference type="ChEBI" id="CHEBI:15379"/>
        <dbReference type="ChEBI" id="CHEBI:29033"/>
        <dbReference type="ChEBI" id="CHEBI:29034"/>
        <dbReference type="ChEBI" id="CHEBI:31488"/>
        <dbReference type="ChEBI" id="CHEBI:31998"/>
    </reaction>
    <physiologicalReaction direction="left-to-right" evidence="8 9">
        <dbReference type="Rhea" id="RHEA:46365"/>
    </physiologicalReaction>
</comment>
<comment type="catalytic activity">
    <reaction evidence="6">
        <text>an N-acyleicosasphinganine + 2 Fe(II)-[cytochrome b5] + O2 + 2 H(+) = N-acyl-4-hydroxyeicosasphinganine + 2 Fe(III)-[cytochrome b5] + H2O</text>
        <dbReference type="Rhea" id="RHEA:55476"/>
        <dbReference type="Rhea" id="RHEA-COMP:10438"/>
        <dbReference type="Rhea" id="RHEA-COMP:10439"/>
        <dbReference type="ChEBI" id="CHEBI:15377"/>
        <dbReference type="ChEBI" id="CHEBI:15378"/>
        <dbReference type="ChEBI" id="CHEBI:15379"/>
        <dbReference type="ChEBI" id="CHEBI:29033"/>
        <dbReference type="ChEBI" id="CHEBI:29034"/>
        <dbReference type="ChEBI" id="CHEBI:71984"/>
        <dbReference type="ChEBI" id="CHEBI:71985"/>
    </reaction>
    <physiologicalReaction direction="left-to-right" evidence="9">
        <dbReference type="Rhea" id="RHEA:55477"/>
    </physiologicalReaction>
</comment>
<comment type="pathway">
    <text>Membrane lipid metabolism; sphingolipid biosynthesis.</text>
</comment>
<comment type="subcellular location">
    <subcellularLocation>
        <location evidence="4">Endoplasmic reticulum membrane</location>
        <topology evidence="7">Multi-pass membrane protein</topology>
    </subcellularLocation>
</comment>
<comment type="disruption phenotype">
    <text evidence="3">Phytosphingosine (PHS) absent from cell, with an increase in dihydrosphingosine (DHS) (PubMed:36897280). Leads to abnormal cellular complex sphingolipid levels (PubMed:36897280). Simultaneous knockout of SVF1 leads to a growth defect (PubMed:36897280).</text>
</comment>
<comment type="miscellaneous">
    <text evidence="2">Present with 54300 molecules/cell in log phase SD medium.</text>
</comment>
<comment type="similarity">
    <text evidence="7">Belongs to the sterol desaturase family.</text>
</comment>
<protein>
    <recommendedName>
        <fullName>Sphingolipid C4-hydroxylase SUR2</fullName>
        <ecNumber>1.-.-.-</ecNumber>
    </recommendedName>
    <alternativeName>
        <fullName>Syringomycin response protein 2</fullName>
    </alternativeName>
</protein>
<sequence>MNVTSNATAAGSFPLAFGLKTSFGFMHYAKAPAINLRPKESLLPEMSDGVLALVAPVVAYWALSGIFHVIDTFHLAEKYRIHPSEEVAKRNKASRMHVFLEVILQHIIQTIVGLIFMHFEPIYMTGFEENAMWKLRADLPRIIPDAAIYYGYMYGMSALKIFAGFLFVDTWQYFLHRLMHMNKTLYKWFHSVHHELYVPYAYGALFNNPVEGFLLDTLGTGIAMTLTHLTHREQIILFTFATMKTVDDHCGYALPLDPFQWLFPNNAVYHDIHHQQFGIKTNFAQPFFTFWDNLFQTNFKGFEEYQKKQRRVTIDKYKEFLQERELEKKEKLKNFKAMNAAENEVKKEK</sequence>
<dbReference type="EC" id="1.-.-.-"/>
<dbReference type="EMBL" id="U07171">
    <property type="protein sequence ID" value="AAA16608.1"/>
    <property type="molecule type" value="Unassigned_DNA"/>
</dbReference>
<dbReference type="EMBL" id="U10427">
    <property type="protein sequence ID" value="AAB41115.1"/>
    <property type="molecule type" value="Genomic_DNA"/>
</dbReference>
<dbReference type="EMBL" id="U28374">
    <property type="protein sequence ID" value="AAB64733.1"/>
    <property type="molecule type" value="Genomic_DNA"/>
</dbReference>
<dbReference type="EMBL" id="BK006938">
    <property type="protein sequence ID" value="DAA12136.1"/>
    <property type="molecule type" value="Genomic_DNA"/>
</dbReference>
<dbReference type="PIR" id="S48533">
    <property type="entry name" value="S48533"/>
</dbReference>
<dbReference type="RefSeq" id="NP_010583.1">
    <property type="nucleotide sequence ID" value="NM_001180605.1"/>
</dbReference>
<dbReference type="SMR" id="P38992"/>
<dbReference type="BioGRID" id="32349">
    <property type="interactions" value="232"/>
</dbReference>
<dbReference type="DIP" id="DIP-7741N"/>
<dbReference type="FunCoup" id="P38992">
    <property type="interactions" value="151"/>
</dbReference>
<dbReference type="IntAct" id="P38992">
    <property type="interactions" value="35"/>
</dbReference>
<dbReference type="MINT" id="P38992"/>
<dbReference type="STRING" id="4932.YDR297W"/>
<dbReference type="SwissLipids" id="SLP:000000370"/>
<dbReference type="PaxDb" id="4932-YDR297W"/>
<dbReference type="PeptideAtlas" id="P38992"/>
<dbReference type="EnsemblFungi" id="YDR297W_mRNA">
    <property type="protein sequence ID" value="YDR297W"/>
    <property type="gene ID" value="YDR297W"/>
</dbReference>
<dbReference type="GeneID" id="851891"/>
<dbReference type="KEGG" id="sce:YDR297W"/>
<dbReference type="AGR" id="SGD:S000002705"/>
<dbReference type="SGD" id="S000002705">
    <property type="gene designation" value="SUR2"/>
</dbReference>
<dbReference type="VEuPathDB" id="FungiDB:YDR297W"/>
<dbReference type="eggNOG" id="KOG0874">
    <property type="taxonomic scope" value="Eukaryota"/>
</dbReference>
<dbReference type="HOGENOM" id="CLU_043293_1_1_1"/>
<dbReference type="InParanoid" id="P38992"/>
<dbReference type="OMA" id="FFIFWDR"/>
<dbReference type="OrthoDB" id="408954at2759"/>
<dbReference type="BioCyc" id="MetaCyc:YDR297W-MONOMER"/>
<dbReference type="BioCyc" id="YEAST:YDR297W-MONOMER"/>
<dbReference type="BRENDA" id="1.14.18.5">
    <property type="organism ID" value="984"/>
</dbReference>
<dbReference type="UniPathway" id="UPA00786"/>
<dbReference type="BioGRID-ORCS" id="851891">
    <property type="hits" value="0 hits in 10 CRISPR screens"/>
</dbReference>
<dbReference type="PRO" id="PR:P38992"/>
<dbReference type="Proteomes" id="UP000002311">
    <property type="component" value="Chromosome IV"/>
</dbReference>
<dbReference type="RNAct" id="P38992">
    <property type="molecule type" value="protein"/>
</dbReference>
<dbReference type="GO" id="GO:0005789">
    <property type="term" value="C:endoplasmic reticulum membrane"/>
    <property type="evidence" value="ECO:0000314"/>
    <property type="project" value="SGD"/>
</dbReference>
<dbReference type="GO" id="GO:0005506">
    <property type="term" value="F:iron ion binding"/>
    <property type="evidence" value="ECO:0007669"/>
    <property type="project" value="InterPro"/>
</dbReference>
<dbReference type="GO" id="GO:0042284">
    <property type="term" value="F:sphingolipid delta-4 desaturase activity"/>
    <property type="evidence" value="ECO:0000318"/>
    <property type="project" value="GO_Central"/>
</dbReference>
<dbReference type="GO" id="GO:0030148">
    <property type="term" value="P:sphingolipid biosynthetic process"/>
    <property type="evidence" value="ECO:0000318"/>
    <property type="project" value="GO_Central"/>
</dbReference>
<dbReference type="GO" id="GO:0006665">
    <property type="term" value="P:sphingolipid metabolic process"/>
    <property type="evidence" value="ECO:0000315"/>
    <property type="project" value="SGD"/>
</dbReference>
<dbReference type="InterPro" id="IPR006694">
    <property type="entry name" value="Fatty_acid_hydroxylase"/>
</dbReference>
<dbReference type="InterPro" id="IPR050307">
    <property type="entry name" value="Sterol_Desaturase_Related"/>
</dbReference>
<dbReference type="PANTHER" id="PTHR11863">
    <property type="entry name" value="STEROL DESATURASE"/>
    <property type="match status" value="1"/>
</dbReference>
<dbReference type="Pfam" id="PF04116">
    <property type="entry name" value="FA_hydroxylase"/>
    <property type="match status" value="1"/>
</dbReference>
<evidence type="ECO:0000255" key="1"/>
<evidence type="ECO:0000269" key="2">
    <source>
    </source>
</evidence>
<evidence type="ECO:0000269" key="3">
    <source>
    </source>
</evidence>
<evidence type="ECO:0000269" key="4">
    <source>
    </source>
</evidence>
<evidence type="ECO:0000269" key="5">
    <source>
    </source>
</evidence>
<evidence type="ECO:0000269" key="6">
    <source>
    </source>
</evidence>
<evidence type="ECO:0000305" key="7"/>
<evidence type="ECO:0000305" key="8">
    <source>
    </source>
</evidence>
<evidence type="ECO:0000305" key="9">
    <source>
    </source>
</evidence>
<name>SUR2_YEAST</name>
<accession>P38992</accession>
<accession>D6VSS6</accession>
<gene>
    <name type="primary">SUR2</name>
    <name type="synonym">SYR2</name>
    <name type="ordered locus">YDR297W</name>
    <name type="ORF">D9740.8</name>
</gene>
<keyword id="KW-0256">Endoplasmic reticulum</keyword>
<keyword id="KW-0444">Lipid biosynthesis</keyword>
<keyword id="KW-0443">Lipid metabolism</keyword>
<keyword id="KW-0472">Membrane</keyword>
<keyword id="KW-0560">Oxidoreductase</keyword>
<keyword id="KW-1185">Reference proteome</keyword>
<keyword id="KW-0812">Transmembrane</keyword>
<keyword id="KW-1133">Transmembrane helix</keyword>
<feature type="chain" id="PRO_0000072316" description="Sphingolipid C4-hydroxylase SUR2">
    <location>
        <begin position="1"/>
        <end position="349"/>
    </location>
</feature>
<feature type="transmembrane region" description="Helical" evidence="1">
    <location>
        <begin position="9"/>
        <end position="29"/>
    </location>
</feature>
<feature type="transmembrane region" description="Helical" evidence="1">
    <location>
        <begin position="50"/>
        <end position="70"/>
    </location>
</feature>
<feature type="transmembrane region" description="Helical" evidence="1">
    <location>
        <begin position="99"/>
        <end position="119"/>
    </location>
</feature>
<feature type="transmembrane region" description="Helical" evidence="1">
    <location>
        <begin position="148"/>
        <end position="168"/>
    </location>
</feature>
<feature type="transmembrane region" description="Helical" evidence="1">
    <location>
        <begin position="209"/>
        <end position="229"/>
    </location>
</feature>
<feature type="domain" description="Fatty acid hydroxylase" evidence="1">
    <location>
        <begin position="162"/>
        <end position="297"/>
    </location>
</feature>
<reference key="1">
    <citation type="submission" date="1994-02" db="EMBL/GenBank/DDBJ databases">
        <authorList>
            <person name="Desfarges L."/>
            <person name="Durrens P."/>
            <person name="Juguelin H."/>
            <person name="Cassagne C."/>
            <person name="Bonneu M."/>
            <person name="Aigle M."/>
        </authorList>
    </citation>
    <scope>NUCLEOTIDE SEQUENCE</scope>
    <source>
        <strain>ATCC 44827 / SKQ2N</strain>
    </source>
</reference>
<reference key="2">
    <citation type="journal article" date="1996" name="Microbiology">
        <title>SYR2, a gene necessary for syringomycin growth inhibition of Saccharomyces cerevisiae.</title>
        <authorList>
            <person name="Cliften P."/>
            <person name="Wang Y."/>
            <person name="Mochizuki D."/>
            <person name="Miyakawa T."/>
            <person name="Wangspa R."/>
            <person name="Hughes J."/>
            <person name="Takemoto J.Y."/>
        </authorList>
    </citation>
    <scope>NUCLEOTIDE SEQUENCE [GENOMIC DNA]</scope>
    <scope>SUBCELLULAR LOCATION</scope>
    <source>
        <strain>KZ1-1C</strain>
    </source>
</reference>
<reference key="3">
    <citation type="journal article" date="1997" name="Nature">
        <title>The nucleotide sequence of Saccharomyces cerevisiae chromosome IV.</title>
        <authorList>
            <person name="Jacq C."/>
            <person name="Alt-Moerbe J."/>
            <person name="Andre B."/>
            <person name="Arnold W."/>
            <person name="Bahr A."/>
            <person name="Ballesta J.P.G."/>
            <person name="Bargues M."/>
            <person name="Baron L."/>
            <person name="Becker A."/>
            <person name="Biteau N."/>
            <person name="Bloecker H."/>
            <person name="Blugeon C."/>
            <person name="Boskovic J."/>
            <person name="Brandt P."/>
            <person name="Brueckner M."/>
            <person name="Buitrago M.J."/>
            <person name="Coster F."/>
            <person name="Delaveau T."/>
            <person name="del Rey F."/>
            <person name="Dujon B."/>
            <person name="Eide L.G."/>
            <person name="Garcia-Cantalejo J.M."/>
            <person name="Goffeau A."/>
            <person name="Gomez-Peris A."/>
            <person name="Granotier C."/>
            <person name="Hanemann V."/>
            <person name="Hankeln T."/>
            <person name="Hoheisel J.D."/>
            <person name="Jaeger W."/>
            <person name="Jimenez A."/>
            <person name="Jonniaux J.-L."/>
            <person name="Kraemer C."/>
            <person name="Kuester H."/>
            <person name="Laamanen P."/>
            <person name="Legros Y."/>
            <person name="Louis E.J."/>
            <person name="Moeller-Rieker S."/>
            <person name="Monnet A."/>
            <person name="Moro M."/>
            <person name="Mueller-Auer S."/>
            <person name="Nussbaumer B."/>
            <person name="Paricio N."/>
            <person name="Paulin L."/>
            <person name="Perea J."/>
            <person name="Perez-Alonso M."/>
            <person name="Perez-Ortin J.E."/>
            <person name="Pohl T.M."/>
            <person name="Prydz H."/>
            <person name="Purnelle B."/>
            <person name="Rasmussen S.W."/>
            <person name="Remacha M.A."/>
            <person name="Revuelta J.L."/>
            <person name="Rieger M."/>
            <person name="Salom D."/>
            <person name="Saluz H.P."/>
            <person name="Saiz J.E."/>
            <person name="Saren A.-M."/>
            <person name="Schaefer M."/>
            <person name="Scharfe M."/>
            <person name="Schmidt E.R."/>
            <person name="Schneider C."/>
            <person name="Scholler P."/>
            <person name="Schwarz S."/>
            <person name="Soler-Mira A."/>
            <person name="Urrestarazu L.A."/>
            <person name="Verhasselt P."/>
            <person name="Vissers S."/>
            <person name="Voet M."/>
            <person name="Volckaert G."/>
            <person name="Wagner G."/>
            <person name="Wambutt R."/>
            <person name="Wedler E."/>
            <person name="Wedler H."/>
            <person name="Woelfl S."/>
            <person name="Harris D.E."/>
            <person name="Bowman S."/>
            <person name="Brown D."/>
            <person name="Churcher C.M."/>
            <person name="Connor R."/>
            <person name="Dedman K."/>
            <person name="Gentles S."/>
            <person name="Hamlin N."/>
            <person name="Hunt S."/>
            <person name="Jones L."/>
            <person name="McDonald S."/>
            <person name="Murphy L.D."/>
            <person name="Niblett D."/>
            <person name="Odell C."/>
            <person name="Oliver K."/>
            <person name="Rajandream M.A."/>
            <person name="Richards C."/>
            <person name="Shore L."/>
            <person name="Walsh S.V."/>
            <person name="Barrell B.G."/>
            <person name="Dietrich F.S."/>
            <person name="Mulligan J.T."/>
            <person name="Allen E."/>
            <person name="Araujo R."/>
            <person name="Aviles E."/>
            <person name="Berno A."/>
            <person name="Carpenter J."/>
            <person name="Chen E."/>
            <person name="Cherry J.M."/>
            <person name="Chung E."/>
            <person name="Duncan M."/>
            <person name="Hunicke-Smith S."/>
            <person name="Hyman R.W."/>
            <person name="Komp C."/>
            <person name="Lashkari D."/>
            <person name="Lew H."/>
            <person name="Lin D."/>
            <person name="Mosedale D."/>
            <person name="Nakahara K."/>
            <person name="Namath A."/>
            <person name="Oefner P."/>
            <person name="Oh C."/>
            <person name="Petel F.X."/>
            <person name="Roberts D."/>
            <person name="Schramm S."/>
            <person name="Schroeder M."/>
            <person name="Shogren T."/>
            <person name="Shroff N."/>
            <person name="Winant A."/>
            <person name="Yelton M.A."/>
            <person name="Botstein D."/>
            <person name="Davis R.W."/>
            <person name="Johnston M."/>
            <person name="Andrews S."/>
            <person name="Brinkman R."/>
            <person name="Cooper J."/>
            <person name="Ding H."/>
            <person name="Du Z."/>
            <person name="Favello A."/>
            <person name="Fulton L."/>
            <person name="Gattung S."/>
            <person name="Greco T."/>
            <person name="Hallsworth K."/>
            <person name="Hawkins J."/>
            <person name="Hillier L.W."/>
            <person name="Jier M."/>
            <person name="Johnson D."/>
            <person name="Johnston L."/>
            <person name="Kirsten J."/>
            <person name="Kucaba T."/>
            <person name="Langston Y."/>
            <person name="Latreille P."/>
            <person name="Le T."/>
            <person name="Mardis E."/>
            <person name="Menezes S."/>
            <person name="Miller N."/>
            <person name="Nhan M."/>
            <person name="Pauley A."/>
            <person name="Peluso D."/>
            <person name="Rifkin L."/>
            <person name="Riles L."/>
            <person name="Taich A."/>
            <person name="Trevaskis E."/>
            <person name="Vignati D."/>
            <person name="Wilcox L."/>
            <person name="Wohldman P."/>
            <person name="Vaudin M."/>
            <person name="Wilson R."/>
            <person name="Waterston R."/>
            <person name="Albermann K."/>
            <person name="Hani J."/>
            <person name="Heumann K."/>
            <person name="Kleine K."/>
            <person name="Mewes H.-W."/>
            <person name="Zollner A."/>
            <person name="Zaccaria P."/>
        </authorList>
    </citation>
    <scope>NUCLEOTIDE SEQUENCE [LARGE SCALE GENOMIC DNA]</scope>
    <source>
        <strain>ATCC 204508 / S288c</strain>
    </source>
</reference>
<reference key="4">
    <citation type="journal article" date="2014" name="G3 (Bethesda)">
        <title>The reference genome sequence of Saccharomyces cerevisiae: Then and now.</title>
        <authorList>
            <person name="Engel S.R."/>
            <person name="Dietrich F.S."/>
            <person name="Fisk D.G."/>
            <person name="Binkley G."/>
            <person name="Balakrishnan R."/>
            <person name="Costanzo M.C."/>
            <person name="Dwight S.S."/>
            <person name="Hitz B.C."/>
            <person name="Karra K."/>
            <person name="Nash R.S."/>
            <person name="Weng S."/>
            <person name="Wong E.D."/>
            <person name="Lloyd P."/>
            <person name="Skrzypek M.S."/>
            <person name="Miyasato S.R."/>
            <person name="Simison M."/>
            <person name="Cherry J.M."/>
        </authorList>
    </citation>
    <scope>GENOME REANNOTATION</scope>
    <source>
        <strain>ATCC 204508 / S288c</strain>
    </source>
</reference>
<reference key="5">
    <citation type="journal article" date="1997" name="J. Biol. Chem.">
        <title>Hydroxylation of Saccharomyces cerevisiae ceramides requires Sur2p and Scs7p.</title>
        <authorList>
            <person name="Haak D."/>
            <person name="Gable K."/>
            <person name="Beeler T."/>
            <person name="Dunn T."/>
        </authorList>
    </citation>
    <scope>FUNCTION</scope>
    <scope>CATALYTIC ACTIVITY</scope>
</reference>
<reference key="6">
    <citation type="journal article" date="1998" name="J. Biol. Chem.">
        <title>Syringomycin action gene SYR2 is essential for sphingolipid 4-hydroxylation in Saccharomyces cerevisiae.</title>
        <authorList>
            <person name="Grilley M.M."/>
            <person name="Stock S.D."/>
            <person name="Dickson R.C."/>
            <person name="Lester R.L."/>
            <person name="Takemoto J.Y."/>
        </authorList>
    </citation>
    <scope>FUNCTION</scope>
    <scope>CATALYTIC ACTIVITY</scope>
</reference>
<reference key="7">
    <citation type="journal article" date="2003" name="Nature">
        <title>Global analysis of protein expression in yeast.</title>
        <authorList>
            <person name="Ghaemmaghami S."/>
            <person name="Huh W.-K."/>
            <person name="Bower K."/>
            <person name="Howson R.W."/>
            <person name="Belle A."/>
            <person name="Dephoure N."/>
            <person name="O'Shea E.K."/>
            <person name="Weissman J.S."/>
        </authorList>
    </citation>
    <scope>LEVEL OF PROTEIN EXPRESSION [LARGE SCALE ANALYSIS]</scope>
</reference>
<reference key="8">
    <citation type="journal article" date="2023" name="J. Cell Biol.">
        <title>Yeast Svf1 binds ceramides and contributes to sphingolipid metabolism at the ER cis-Golgi interface.</title>
        <authorList>
            <person name="Limar S."/>
            <person name="Koerner C."/>
            <person name="Martinez-Montanes F."/>
            <person name="Stancheva V.G."/>
            <person name="Wolf V.N."/>
            <person name="Walter S."/>
            <person name="Miller E.A."/>
            <person name="Ejsing C.S."/>
            <person name="Galassi V.V."/>
            <person name="Froehlich F."/>
        </authorList>
    </citation>
    <scope>DISRUPTION PHENOTYPE</scope>
</reference>
<proteinExistence type="evidence at protein level"/>
<organism>
    <name type="scientific">Saccharomyces cerevisiae (strain ATCC 204508 / S288c)</name>
    <name type="common">Baker's yeast</name>
    <dbReference type="NCBI Taxonomy" id="559292"/>
    <lineage>
        <taxon>Eukaryota</taxon>
        <taxon>Fungi</taxon>
        <taxon>Dikarya</taxon>
        <taxon>Ascomycota</taxon>
        <taxon>Saccharomycotina</taxon>
        <taxon>Saccharomycetes</taxon>
        <taxon>Saccharomycetales</taxon>
        <taxon>Saccharomycetaceae</taxon>
        <taxon>Saccharomyces</taxon>
    </lineage>
</organism>